<proteinExistence type="evidence at protein level"/>
<name>HAGHL_MOUSE</name>
<sequence>MKVKVIPVLEDNYMYLIIEEHTREAVAIDVAVAERLLEIAGREGVSLTMVLSTHHHWDHTRGNAELAHILPGLAVLGADERICALTRRLEHGEGLQFGAIHVRCLLTPGHTSGHMSYFLWEDDCPDSPALFSGDALSVAGCGWHLEDTAQQMYQSLAKTLGTLPPETKVFCGHEHTLSNLEFAQKVEPCNEHVQAKLSWAQERDDEDIPTVPSTLGEELMYNPFLRVTEDAVRAFTGQVAPAQVLEALCRERARFQPAVEPPQPQVRALLALQWGLLSTHQKK</sequence>
<accession>Q9DB32</accession>
<accession>Q8C8C4</accession>
<gene>
    <name type="primary">Haghl</name>
</gene>
<dbReference type="EC" id="3.1.2.-"/>
<dbReference type="EMBL" id="AK005274">
    <property type="protein sequence ID" value="BAB23924.1"/>
    <property type="molecule type" value="mRNA"/>
</dbReference>
<dbReference type="EMBL" id="AK047517">
    <property type="protein sequence ID" value="BAC33079.1"/>
    <property type="molecule type" value="mRNA"/>
</dbReference>
<dbReference type="EMBL" id="BC030466">
    <property type="protein sequence ID" value="AAH30466.1"/>
    <property type="molecule type" value="mRNA"/>
</dbReference>
<dbReference type="EMBL" id="BC083322">
    <property type="protein sequence ID" value="AAH83322.1"/>
    <property type="molecule type" value="mRNA"/>
</dbReference>
<dbReference type="CCDS" id="CCDS28527.1">
    <molecule id="Q9DB32-1"/>
</dbReference>
<dbReference type="CCDS" id="CCDS70773.1">
    <molecule id="Q9DB32-2"/>
</dbReference>
<dbReference type="RefSeq" id="NP_001258362.1">
    <molecule id="Q9DB32-1"/>
    <property type="nucleotide sequence ID" value="NM_001271433.1"/>
</dbReference>
<dbReference type="RefSeq" id="NP_001258364.1">
    <molecule id="Q9DB32-2"/>
    <property type="nucleotide sequence ID" value="NM_001271435.1"/>
</dbReference>
<dbReference type="RefSeq" id="NP_081173.1">
    <molecule id="Q9DB32-1"/>
    <property type="nucleotide sequence ID" value="NM_026897.3"/>
</dbReference>
<dbReference type="SMR" id="Q9DB32"/>
<dbReference type="BioGRID" id="213153">
    <property type="interactions" value="7"/>
</dbReference>
<dbReference type="FunCoup" id="Q9DB32">
    <property type="interactions" value="19"/>
</dbReference>
<dbReference type="STRING" id="10090.ENSMUSP00000077091"/>
<dbReference type="PhosphoSitePlus" id="Q9DB32"/>
<dbReference type="PaxDb" id="10090-ENSMUSP00000119647"/>
<dbReference type="PeptideAtlas" id="Q9DB32"/>
<dbReference type="ProteomicsDB" id="269710">
    <molecule id="Q9DB32-1"/>
</dbReference>
<dbReference type="ProteomicsDB" id="269711">
    <molecule id="Q9DB32-2"/>
</dbReference>
<dbReference type="Pumba" id="Q9DB32"/>
<dbReference type="Antibodypedia" id="59077">
    <property type="antibodies" value="164 antibodies from 12 providers"/>
</dbReference>
<dbReference type="DNASU" id="68977"/>
<dbReference type="Ensembl" id="ENSMUST00000077938.10">
    <molecule id="Q9DB32-1"/>
    <property type="protein sequence ID" value="ENSMUSP00000077091.4"/>
    <property type="gene ID" value="ENSMUSG00000061046.10"/>
</dbReference>
<dbReference type="Ensembl" id="ENSMUST00000140738.8">
    <molecule id="Q9DB32-2"/>
    <property type="protein sequence ID" value="ENSMUSP00000116841.2"/>
    <property type="gene ID" value="ENSMUSG00000061046.10"/>
</dbReference>
<dbReference type="Ensembl" id="ENSMUST00000150324.8">
    <molecule id="Q9DB32-1"/>
    <property type="protein sequence ID" value="ENSMUSP00000119647.2"/>
    <property type="gene ID" value="ENSMUSG00000061046.10"/>
</dbReference>
<dbReference type="GeneID" id="68977"/>
<dbReference type="KEGG" id="mmu:68977"/>
<dbReference type="UCSC" id="uc008bbr.2">
    <molecule id="Q9DB32-1"/>
    <property type="organism name" value="mouse"/>
</dbReference>
<dbReference type="UCSC" id="uc033hby.1">
    <molecule id="Q9DB32-2"/>
    <property type="organism name" value="mouse"/>
</dbReference>
<dbReference type="AGR" id="MGI:1919877"/>
<dbReference type="CTD" id="84264"/>
<dbReference type="MGI" id="MGI:1919877">
    <property type="gene designation" value="Haghl"/>
</dbReference>
<dbReference type="VEuPathDB" id="HostDB:ENSMUSG00000061046"/>
<dbReference type="eggNOG" id="KOG0813">
    <property type="taxonomic scope" value="Eukaryota"/>
</dbReference>
<dbReference type="GeneTree" id="ENSGT00940000161924"/>
<dbReference type="HOGENOM" id="CLU_030571_4_0_1"/>
<dbReference type="InParanoid" id="Q9DB32"/>
<dbReference type="OMA" id="CKERARF"/>
<dbReference type="OrthoDB" id="515692at2759"/>
<dbReference type="PhylomeDB" id="Q9DB32"/>
<dbReference type="TreeFam" id="TF105273"/>
<dbReference type="BioGRID-ORCS" id="68977">
    <property type="hits" value="1 hit in 79 CRISPR screens"/>
</dbReference>
<dbReference type="ChiTaRS" id="Haghl">
    <property type="organism name" value="mouse"/>
</dbReference>
<dbReference type="PRO" id="PR:Q9DB32"/>
<dbReference type="Proteomes" id="UP000000589">
    <property type="component" value="Chromosome 17"/>
</dbReference>
<dbReference type="RNAct" id="Q9DB32">
    <property type="molecule type" value="protein"/>
</dbReference>
<dbReference type="Bgee" id="ENSMUSG00000061046">
    <property type="expression patterns" value="Expressed in ventral horn of spinal cord and 216 other cell types or tissues"/>
</dbReference>
<dbReference type="ExpressionAtlas" id="Q9DB32">
    <property type="expression patterns" value="baseline and differential"/>
</dbReference>
<dbReference type="GO" id="GO:0004416">
    <property type="term" value="F:hydroxyacylglutathione hydrolase activity"/>
    <property type="evidence" value="ECO:0007669"/>
    <property type="project" value="InterPro"/>
</dbReference>
<dbReference type="GO" id="GO:0046872">
    <property type="term" value="F:metal ion binding"/>
    <property type="evidence" value="ECO:0007669"/>
    <property type="project" value="UniProtKB-KW"/>
</dbReference>
<dbReference type="GO" id="GO:0019243">
    <property type="term" value="P:methylglyoxal catabolic process to D-lactate via S-lactoyl-glutathione"/>
    <property type="evidence" value="ECO:0007669"/>
    <property type="project" value="InterPro"/>
</dbReference>
<dbReference type="CDD" id="cd07723">
    <property type="entry name" value="hydroxyacylglutathione_hydrolase_MBL-fold"/>
    <property type="match status" value="1"/>
</dbReference>
<dbReference type="Gene3D" id="3.60.15.10">
    <property type="entry name" value="Ribonuclease Z/Hydroxyacylglutathione hydrolase-like"/>
    <property type="match status" value="1"/>
</dbReference>
<dbReference type="HAMAP" id="MF_01374">
    <property type="entry name" value="Glyoxalase_2"/>
    <property type="match status" value="1"/>
</dbReference>
<dbReference type="InterPro" id="IPR035680">
    <property type="entry name" value="Clx_II_MBL"/>
</dbReference>
<dbReference type="InterPro" id="IPR032282">
    <property type="entry name" value="HAGH_C"/>
</dbReference>
<dbReference type="InterPro" id="IPR017782">
    <property type="entry name" value="Hydroxyacylglutathione_Hdrlase"/>
</dbReference>
<dbReference type="InterPro" id="IPR001279">
    <property type="entry name" value="Metallo-B-lactamas"/>
</dbReference>
<dbReference type="InterPro" id="IPR036866">
    <property type="entry name" value="RibonucZ/Hydroxyglut_hydro"/>
</dbReference>
<dbReference type="NCBIfam" id="TIGR03413">
    <property type="entry name" value="GSH_gloB"/>
    <property type="match status" value="1"/>
</dbReference>
<dbReference type="PANTHER" id="PTHR11935">
    <property type="entry name" value="BETA LACTAMASE DOMAIN"/>
    <property type="match status" value="1"/>
</dbReference>
<dbReference type="PANTHER" id="PTHR11935:SF77">
    <property type="entry name" value="HYDROXYACYLGLUTATHIONE HYDROLASE-LIKE PROTEIN"/>
    <property type="match status" value="1"/>
</dbReference>
<dbReference type="Pfam" id="PF16123">
    <property type="entry name" value="HAGH_C"/>
    <property type="match status" value="1"/>
</dbReference>
<dbReference type="Pfam" id="PF00753">
    <property type="entry name" value="Lactamase_B"/>
    <property type="match status" value="1"/>
</dbReference>
<dbReference type="SMART" id="SM00849">
    <property type="entry name" value="Lactamase_B"/>
    <property type="match status" value="1"/>
</dbReference>
<dbReference type="SUPFAM" id="SSF56281">
    <property type="entry name" value="Metallo-hydrolase/oxidoreductase"/>
    <property type="match status" value="1"/>
</dbReference>
<protein>
    <recommendedName>
        <fullName>Hydroxyacylglutathione hydrolase-like protein</fullName>
        <ecNumber>3.1.2.-</ecNumber>
    </recommendedName>
</protein>
<keyword id="KW-0025">Alternative splicing</keyword>
<keyword id="KW-0378">Hydrolase</keyword>
<keyword id="KW-0479">Metal-binding</keyword>
<keyword id="KW-1185">Reference proteome</keyword>
<keyword id="KW-0862">Zinc</keyword>
<reference key="1">
    <citation type="journal article" date="2005" name="Science">
        <title>The transcriptional landscape of the mammalian genome.</title>
        <authorList>
            <person name="Carninci P."/>
            <person name="Kasukawa T."/>
            <person name="Katayama S."/>
            <person name="Gough J."/>
            <person name="Frith M.C."/>
            <person name="Maeda N."/>
            <person name="Oyama R."/>
            <person name="Ravasi T."/>
            <person name="Lenhard B."/>
            <person name="Wells C."/>
            <person name="Kodzius R."/>
            <person name="Shimokawa K."/>
            <person name="Bajic V.B."/>
            <person name="Brenner S.E."/>
            <person name="Batalov S."/>
            <person name="Forrest A.R."/>
            <person name="Zavolan M."/>
            <person name="Davis M.J."/>
            <person name="Wilming L.G."/>
            <person name="Aidinis V."/>
            <person name="Allen J.E."/>
            <person name="Ambesi-Impiombato A."/>
            <person name="Apweiler R."/>
            <person name="Aturaliya R.N."/>
            <person name="Bailey T.L."/>
            <person name="Bansal M."/>
            <person name="Baxter L."/>
            <person name="Beisel K.W."/>
            <person name="Bersano T."/>
            <person name="Bono H."/>
            <person name="Chalk A.M."/>
            <person name="Chiu K.P."/>
            <person name="Choudhary V."/>
            <person name="Christoffels A."/>
            <person name="Clutterbuck D.R."/>
            <person name="Crowe M.L."/>
            <person name="Dalla E."/>
            <person name="Dalrymple B.P."/>
            <person name="de Bono B."/>
            <person name="Della Gatta G."/>
            <person name="di Bernardo D."/>
            <person name="Down T."/>
            <person name="Engstrom P."/>
            <person name="Fagiolini M."/>
            <person name="Faulkner G."/>
            <person name="Fletcher C.F."/>
            <person name="Fukushima T."/>
            <person name="Furuno M."/>
            <person name="Futaki S."/>
            <person name="Gariboldi M."/>
            <person name="Georgii-Hemming P."/>
            <person name="Gingeras T.R."/>
            <person name="Gojobori T."/>
            <person name="Green R.E."/>
            <person name="Gustincich S."/>
            <person name="Harbers M."/>
            <person name="Hayashi Y."/>
            <person name="Hensch T.K."/>
            <person name="Hirokawa N."/>
            <person name="Hill D."/>
            <person name="Huminiecki L."/>
            <person name="Iacono M."/>
            <person name="Ikeo K."/>
            <person name="Iwama A."/>
            <person name="Ishikawa T."/>
            <person name="Jakt M."/>
            <person name="Kanapin A."/>
            <person name="Katoh M."/>
            <person name="Kawasawa Y."/>
            <person name="Kelso J."/>
            <person name="Kitamura H."/>
            <person name="Kitano H."/>
            <person name="Kollias G."/>
            <person name="Krishnan S.P."/>
            <person name="Kruger A."/>
            <person name="Kummerfeld S.K."/>
            <person name="Kurochkin I.V."/>
            <person name="Lareau L.F."/>
            <person name="Lazarevic D."/>
            <person name="Lipovich L."/>
            <person name="Liu J."/>
            <person name="Liuni S."/>
            <person name="McWilliam S."/>
            <person name="Madan Babu M."/>
            <person name="Madera M."/>
            <person name="Marchionni L."/>
            <person name="Matsuda H."/>
            <person name="Matsuzawa S."/>
            <person name="Miki H."/>
            <person name="Mignone F."/>
            <person name="Miyake S."/>
            <person name="Morris K."/>
            <person name="Mottagui-Tabar S."/>
            <person name="Mulder N."/>
            <person name="Nakano N."/>
            <person name="Nakauchi H."/>
            <person name="Ng P."/>
            <person name="Nilsson R."/>
            <person name="Nishiguchi S."/>
            <person name="Nishikawa S."/>
            <person name="Nori F."/>
            <person name="Ohara O."/>
            <person name="Okazaki Y."/>
            <person name="Orlando V."/>
            <person name="Pang K.C."/>
            <person name="Pavan W.J."/>
            <person name="Pavesi G."/>
            <person name="Pesole G."/>
            <person name="Petrovsky N."/>
            <person name="Piazza S."/>
            <person name="Reed J."/>
            <person name="Reid J.F."/>
            <person name="Ring B.Z."/>
            <person name="Ringwald M."/>
            <person name="Rost B."/>
            <person name="Ruan Y."/>
            <person name="Salzberg S.L."/>
            <person name="Sandelin A."/>
            <person name="Schneider C."/>
            <person name="Schoenbach C."/>
            <person name="Sekiguchi K."/>
            <person name="Semple C.A."/>
            <person name="Seno S."/>
            <person name="Sessa L."/>
            <person name="Sheng Y."/>
            <person name="Shibata Y."/>
            <person name="Shimada H."/>
            <person name="Shimada K."/>
            <person name="Silva D."/>
            <person name="Sinclair B."/>
            <person name="Sperling S."/>
            <person name="Stupka E."/>
            <person name="Sugiura K."/>
            <person name="Sultana R."/>
            <person name="Takenaka Y."/>
            <person name="Taki K."/>
            <person name="Tammoja K."/>
            <person name="Tan S.L."/>
            <person name="Tang S."/>
            <person name="Taylor M.S."/>
            <person name="Tegner J."/>
            <person name="Teichmann S.A."/>
            <person name="Ueda H.R."/>
            <person name="van Nimwegen E."/>
            <person name="Verardo R."/>
            <person name="Wei C.L."/>
            <person name="Yagi K."/>
            <person name="Yamanishi H."/>
            <person name="Zabarovsky E."/>
            <person name="Zhu S."/>
            <person name="Zimmer A."/>
            <person name="Hide W."/>
            <person name="Bult C."/>
            <person name="Grimmond S.M."/>
            <person name="Teasdale R.D."/>
            <person name="Liu E.T."/>
            <person name="Brusic V."/>
            <person name="Quackenbush J."/>
            <person name="Wahlestedt C."/>
            <person name="Mattick J.S."/>
            <person name="Hume D.A."/>
            <person name="Kai C."/>
            <person name="Sasaki D."/>
            <person name="Tomaru Y."/>
            <person name="Fukuda S."/>
            <person name="Kanamori-Katayama M."/>
            <person name="Suzuki M."/>
            <person name="Aoki J."/>
            <person name="Arakawa T."/>
            <person name="Iida J."/>
            <person name="Imamura K."/>
            <person name="Itoh M."/>
            <person name="Kato T."/>
            <person name="Kawaji H."/>
            <person name="Kawagashira N."/>
            <person name="Kawashima T."/>
            <person name="Kojima M."/>
            <person name="Kondo S."/>
            <person name="Konno H."/>
            <person name="Nakano K."/>
            <person name="Ninomiya N."/>
            <person name="Nishio T."/>
            <person name="Okada M."/>
            <person name="Plessy C."/>
            <person name="Shibata K."/>
            <person name="Shiraki T."/>
            <person name="Suzuki S."/>
            <person name="Tagami M."/>
            <person name="Waki K."/>
            <person name="Watahiki A."/>
            <person name="Okamura-Oho Y."/>
            <person name="Suzuki H."/>
            <person name="Kawai J."/>
            <person name="Hayashizaki Y."/>
        </authorList>
    </citation>
    <scope>NUCLEOTIDE SEQUENCE [LARGE SCALE MRNA] (ISOFORMS 1 AND 2)</scope>
    <source>
        <strain>C57BL/6J</strain>
        <tissue>Cerebellum</tissue>
    </source>
</reference>
<reference key="2">
    <citation type="journal article" date="2004" name="Genome Res.">
        <title>The status, quality, and expansion of the NIH full-length cDNA project: the Mammalian Gene Collection (MGC).</title>
        <authorList>
            <consortium name="The MGC Project Team"/>
        </authorList>
    </citation>
    <scope>NUCLEOTIDE SEQUENCE [LARGE SCALE MRNA] (ISOFORM 1)</scope>
    <source>
        <strain>C57BL/6J</strain>
        <strain>FVB/N</strain>
        <tissue>Brain</tissue>
        <tissue>Mammary tumor</tissue>
    </source>
</reference>
<reference key="3">
    <citation type="journal article" date="2010" name="Cell">
        <title>A tissue-specific atlas of mouse protein phosphorylation and expression.</title>
        <authorList>
            <person name="Huttlin E.L."/>
            <person name="Jedrychowski M.P."/>
            <person name="Elias J.E."/>
            <person name="Goswami T."/>
            <person name="Rad R."/>
            <person name="Beausoleil S.A."/>
            <person name="Villen J."/>
            <person name="Haas W."/>
            <person name="Sowa M.E."/>
            <person name="Gygi S.P."/>
        </authorList>
    </citation>
    <scope>IDENTIFICATION BY MASS SPECTROMETRY [LARGE SCALE ANALYSIS]</scope>
    <source>
        <tissue>Brain</tissue>
    </source>
</reference>
<evidence type="ECO:0000250" key="1"/>
<evidence type="ECO:0000303" key="2">
    <source>
    </source>
</evidence>
<evidence type="ECO:0000305" key="3"/>
<feature type="chain" id="PRO_0000313602" description="Hydroxyacylglutathione hydrolase-like protein">
    <location>
        <begin position="1"/>
        <end position="283"/>
    </location>
</feature>
<feature type="binding site" evidence="1">
    <location>
        <position position="54"/>
    </location>
    <ligand>
        <name>Zn(2+)</name>
        <dbReference type="ChEBI" id="CHEBI:29105"/>
        <label>1</label>
    </ligand>
</feature>
<feature type="binding site" evidence="1">
    <location>
        <position position="56"/>
    </location>
    <ligand>
        <name>Zn(2+)</name>
        <dbReference type="ChEBI" id="CHEBI:29105"/>
        <label>1</label>
    </ligand>
</feature>
<feature type="binding site" evidence="1">
    <location>
        <position position="58"/>
    </location>
    <ligand>
        <name>Zn(2+)</name>
        <dbReference type="ChEBI" id="CHEBI:29105"/>
        <label>2</label>
    </ligand>
</feature>
<feature type="binding site" evidence="1">
    <location>
        <position position="59"/>
    </location>
    <ligand>
        <name>Zn(2+)</name>
        <dbReference type="ChEBI" id="CHEBI:29105"/>
        <label>2</label>
    </ligand>
</feature>
<feature type="binding site" evidence="1">
    <location>
        <position position="110"/>
    </location>
    <ligand>
        <name>Zn(2+)</name>
        <dbReference type="ChEBI" id="CHEBI:29105"/>
        <label>1</label>
    </ligand>
</feature>
<feature type="binding site" evidence="1">
    <location>
        <position position="134"/>
    </location>
    <ligand>
        <name>Zn(2+)</name>
        <dbReference type="ChEBI" id="CHEBI:29105"/>
        <label>1</label>
    </ligand>
</feature>
<feature type="binding site" evidence="1">
    <location>
        <position position="134"/>
    </location>
    <ligand>
        <name>Zn(2+)</name>
        <dbReference type="ChEBI" id="CHEBI:29105"/>
        <label>2</label>
    </ligand>
</feature>
<feature type="binding site" evidence="1">
    <location>
        <position position="173"/>
    </location>
    <ligand>
        <name>Zn(2+)</name>
        <dbReference type="ChEBI" id="CHEBI:29105"/>
        <label>2</label>
    </ligand>
</feature>
<feature type="splice variant" id="VSP_030057" description="In isoform 2." evidence="2">
    <original>EDAVRAFTGQVA</original>
    <variation>QLQPRRLSSHCL</variation>
    <location>
        <begin position="229"/>
        <end position="240"/>
    </location>
</feature>
<feature type="splice variant" id="VSP_030058" description="In isoform 2." evidence="2">
    <location>
        <begin position="241"/>
        <end position="283"/>
    </location>
</feature>
<comment type="function">
    <text evidence="3">Hydrolase acting on ester bonds.</text>
</comment>
<comment type="cofactor">
    <cofactor evidence="1">
        <name>Zn(2+)</name>
        <dbReference type="ChEBI" id="CHEBI:29105"/>
    </cofactor>
    <text evidence="1">Binds 2 Zn(2+) ions per subunit.</text>
</comment>
<comment type="alternative products">
    <event type="alternative splicing"/>
    <isoform>
        <id>Q9DB32-1</id>
        <name>1</name>
        <sequence type="displayed"/>
    </isoform>
    <isoform>
        <id>Q9DB32-2</id>
        <name>2</name>
        <sequence type="described" ref="VSP_030057 VSP_030058"/>
    </isoform>
</comment>
<comment type="similarity">
    <text evidence="3">Belongs to the metallo-beta-lactamase superfamily. Glyoxalase II family.</text>
</comment>
<organism>
    <name type="scientific">Mus musculus</name>
    <name type="common">Mouse</name>
    <dbReference type="NCBI Taxonomy" id="10090"/>
    <lineage>
        <taxon>Eukaryota</taxon>
        <taxon>Metazoa</taxon>
        <taxon>Chordata</taxon>
        <taxon>Craniata</taxon>
        <taxon>Vertebrata</taxon>
        <taxon>Euteleostomi</taxon>
        <taxon>Mammalia</taxon>
        <taxon>Eutheria</taxon>
        <taxon>Euarchontoglires</taxon>
        <taxon>Glires</taxon>
        <taxon>Rodentia</taxon>
        <taxon>Myomorpha</taxon>
        <taxon>Muroidea</taxon>
        <taxon>Muridae</taxon>
        <taxon>Murinae</taxon>
        <taxon>Mus</taxon>
        <taxon>Mus</taxon>
    </lineage>
</organism>